<reference key="1">
    <citation type="journal article" date="2003" name="Nature">
        <title>Genome divergence in two Prochlorococcus ecotypes reflects oceanic niche differentiation.</title>
        <authorList>
            <person name="Rocap G."/>
            <person name="Larimer F.W."/>
            <person name="Lamerdin J.E."/>
            <person name="Malfatti S."/>
            <person name="Chain P."/>
            <person name="Ahlgren N.A."/>
            <person name="Arellano A."/>
            <person name="Coleman M."/>
            <person name="Hauser L."/>
            <person name="Hess W.R."/>
            <person name="Johnson Z.I."/>
            <person name="Land M.L."/>
            <person name="Lindell D."/>
            <person name="Post A.F."/>
            <person name="Regala W."/>
            <person name="Shah M."/>
            <person name="Shaw S.L."/>
            <person name="Steglich C."/>
            <person name="Sullivan M.B."/>
            <person name="Ting C.S."/>
            <person name="Tolonen A."/>
            <person name="Webb E.A."/>
            <person name="Zinser E.R."/>
            <person name="Chisholm S.W."/>
        </authorList>
    </citation>
    <scope>NUCLEOTIDE SEQUENCE [LARGE SCALE GENOMIC DNA]</scope>
    <source>
        <strain>CCMP1986 / NIES-2087 / MED4</strain>
    </source>
</reference>
<keyword id="KW-0131">Cell cycle</keyword>
<keyword id="KW-0132">Cell division</keyword>
<keyword id="KW-0717">Septation</keyword>
<name>MINC_PROMP</name>
<protein>
    <recommendedName>
        <fullName evidence="1">Probable septum site-determining protein MinC</fullName>
    </recommendedName>
</protein>
<gene>
    <name evidence="1" type="primary">minC</name>
    <name type="ordered locus">PMM0322</name>
</gene>
<evidence type="ECO:0000255" key="1">
    <source>
        <dbReference type="HAMAP-Rule" id="MF_00267"/>
    </source>
</evidence>
<sequence>MKLILRGIANEFIKSFSFKNFEIDQNFFDKLITKEAPAAANLITENEKINSYELAKLKLILEKHFIKLSNIYSNNRETVLSGKSLKINSTFLKIKDLENQLPLDPSYLKKDILHKGTVRSGDRISSNGDLFIIGDVNPGAIISANNNVYVWGKLFGIAFAGKNGNKNASVASLYLNPLQLRICEIVAIGPKEKPKGQHPEIAILEDNKIIIKPYFLNQNL</sequence>
<dbReference type="EMBL" id="BX548174">
    <property type="protein sequence ID" value="CAE18781.1"/>
    <property type="molecule type" value="Genomic_DNA"/>
</dbReference>
<dbReference type="RefSeq" id="WP_011131959.1">
    <property type="nucleotide sequence ID" value="NC_005072.1"/>
</dbReference>
<dbReference type="SMR" id="Q7V2X8"/>
<dbReference type="STRING" id="59919.PMM0322"/>
<dbReference type="KEGG" id="pmm:PMM0322"/>
<dbReference type="eggNOG" id="COG0850">
    <property type="taxonomic scope" value="Bacteria"/>
</dbReference>
<dbReference type="HOGENOM" id="CLU_048711_0_2_3"/>
<dbReference type="OrthoDB" id="9790810at2"/>
<dbReference type="Proteomes" id="UP000001026">
    <property type="component" value="Chromosome"/>
</dbReference>
<dbReference type="GO" id="GO:0000902">
    <property type="term" value="P:cell morphogenesis"/>
    <property type="evidence" value="ECO:0007669"/>
    <property type="project" value="InterPro"/>
</dbReference>
<dbReference type="GO" id="GO:0000917">
    <property type="term" value="P:division septum assembly"/>
    <property type="evidence" value="ECO:0007669"/>
    <property type="project" value="UniProtKB-KW"/>
</dbReference>
<dbReference type="GO" id="GO:1901891">
    <property type="term" value="P:regulation of cell septum assembly"/>
    <property type="evidence" value="ECO:0007669"/>
    <property type="project" value="InterPro"/>
</dbReference>
<dbReference type="Gene3D" id="2.160.20.70">
    <property type="match status" value="1"/>
</dbReference>
<dbReference type="HAMAP" id="MF_00267">
    <property type="entry name" value="MinC"/>
    <property type="match status" value="1"/>
</dbReference>
<dbReference type="InterPro" id="IPR016098">
    <property type="entry name" value="CAP/MinC_C"/>
</dbReference>
<dbReference type="InterPro" id="IPR013033">
    <property type="entry name" value="MinC"/>
</dbReference>
<dbReference type="InterPro" id="IPR036145">
    <property type="entry name" value="MinC_C_sf"/>
</dbReference>
<dbReference type="InterPro" id="IPR005526">
    <property type="entry name" value="Septum_form_inhib_MinC_C"/>
</dbReference>
<dbReference type="PANTHER" id="PTHR34108">
    <property type="entry name" value="SEPTUM SITE-DETERMINING PROTEIN MINC"/>
    <property type="match status" value="1"/>
</dbReference>
<dbReference type="PANTHER" id="PTHR34108:SF1">
    <property type="entry name" value="SEPTUM SITE-DETERMINING PROTEIN MINC"/>
    <property type="match status" value="1"/>
</dbReference>
<dbReference type="Pfam" id="PF03775">
    <property type="entry name" value="MinC_C"/>
    <property type="match status" value="1"/>
</dbReference>
<dbReference type="SUPFAM" id="SSF63848">
    <property type="entry name" value="Cell-division inhibitor MinC, C-terminal domain"/>
    <property type="match status" value="1"/>
</dbReference>
<comment type="function">
    <text evidence="1">Cell division inhibitor that blocks the formation of polar Z ring septums. Rapidly oscillates between the poles of the cell to destabilize FtsZ filaments that have formed before they mature into polar Z rings. Prevents FtsZ polymerization.</text>
</comment>
<comment type="subunit">
    <text evidence="1">Interacts with MinD and FtsZ.</text>
</comment>
<comment type="similarity">
    <text evidence="1">Belongs to the MinC family.</text>
</comment>
<proteinExistence type="inferred from homology"/>
<organism>
    <name type="scientific">Prochlorococcus marinus subsp. pastoris (strain CCMP1986 / NIES-2087 / MED4)</name>
    <dbReference type="NCBI Taxonomy" id="59919"/>
    <lineage>
        <taxon>Bacteria</taxon>
        <taxon>Bacillati</taxon>
        <taxon>Cyanobacteriota</taxon>
        <taxon>Cyanophyceae</taxon>
        <taxon>Synechococcales</taxon>
        <taxon>Prochlorococcaceae</taxon>
        <taxon>Prochlorococcus</taxon>
    </lineage>
</organism>
<accession>Q7V2X8</accession>
<feature type="chain" id="PRO_0000189053" description="Probable septum site-determining protein MinC">
    <location>
        <begin position="1"/>
        <end position="220"/>
    </location>
</feature>